<evidence type="ECO:0000250" key="1"/>
<evidence type="ECO:0000255" key="2"/>
<evidence type="ECO:0000305" key="3"/>
<comment type="function">
    <text evidence="1">Nonprocessive beta-mannosyltransferase that catalyzes the transfer of a mannose residue from GDP-mannose to glucuronic acid-beta-1,2-mannose-alpha-1,3-glucose-beta-1,4-glucose-PP-polyisoprenyl to form the lipid-linked pentasaccharide repeating unit of xanthan, Man-GlcA-Man-Glc(2)-PP-Pol. Is involved in the biosynthesis of the exopolysaccharide xanthan (By similarity).</text>
</comment>
<comment type="catalytic activity">
    <reaction>
        <text>beta-D-GlcA-(1-&gt;2)-alpha-D-Man-(1-&gt;3)-beta-D-Glc-(1-&gt;4)-alpha-D-Glc-di-trans,octa-cis-undecaprenyl diphosphate + GDP-alpha-D-mannose = beta-D-Man-(1-&gt;4)-beta-D-GlcA-(1-&gt;2)-alpha-D-Man-(1-&gt;3)-beta-D-Glc-(1-&gt;4)-alpha-D-Glc-di-trans,octa-cis-undecaprenyl diphosphate + GDP + H(+)</text>
        <dbReference type="Rhea" id="RHEA:28306"/>
        <dbReference type="ChEBI" id="CHEBI:15378"/>
        <dbReference type="ChEBI" id="CHEBI:57527"/>
        <dbReference type="ChEBI" id="CHEBI:58189"/>
        <dbReference type="ChEBI" id="CHEBI:61227"/>
        <dbReference type="ChEBI" id="CHEBI:61230"/>
        <dbReference type="EC" id="2.4.1.251"/>
    </reaction>
</comment>
<comment type="pathway">
    <text>Glycan biosynthesis; xanthan biosynthesis.</text>
</comment>
<comment type="subcellular location">
    <subcellularLocation>
        <location evidence="1">Cell inner membrane</location>
    </subcellularLocation>
</comment>
<comment type="similarity">
    <text evidence="3">Belongs to the glycosyltransferase 94 family.</text>
</comment>
<keyword id="KW-0119">Carbohydrate metabolism</keyword>
<keyword id="KW-0997">Cell inner membrane</keyword>
<keyword id="KW-1003">Cell membrane</keyword>
<keyword id="KW-0328">Glycosyltransferase</keyword>
<keyword id="KW-0472">Membrane</keyword>
<keyword id="KW-1185">Reference proteome</keyword>
<keyword id="KW-0732">Signal</keyword>
<keyword id="KW-0808">Transferase</keyword>
<accession>Q8P804</accession>
<dbReference type="EC" id="2.4.1.251"/>
<dbReference type="EMBL" id="AE008922">
    <property type="protein sequence ID" value="AAM41724.1"/>
    <property type="molecule type" value="Genomic_DNA"/>
</dbReference>
<dbReference type="RefSeq" id="NP_637800.1">
    <property type="nucleotide sequence ID" value="NC_003902.1"/>
</dbReference>
<dbReference type="RefSeq" id="WP_011037588.1">
    <property type="nucleotide sequence ID" value="NC_003902.1"/>
</dbReference>
<dbReference type="SMR" id="Q8P804"/>
<dbReference type="STRING" id="190485.XCC2447"/>
<dbReference type="CAZy" id="GT94">
    <property type="family name" value="Glycosyltransferase Family 94"/>
</dbReference>
<dbReference type="EnsemblBacteria" id="AAM41724">
    <property type="protein sequence ID" value="AAM41724"/>
    <property type="gene ID" value="XCC2447"/>
</dbReference>
<dbReference type="KEGG" id="xcc:XCC2447"/>
<dbReference type="PATRIC" id="fig|190485.4.peg.2611"/>
<dbReference type="eggNOG" id="COG0438">
    <property type="taxonomic scope" value="Bacteria"/>
</dbReference>
<dbReference type="HOGENOM" id="CLU_009583_6_0_6"/>
<dbReference type="OrthoDB" id="9790710at2"/>
<dbReference type="UniPathway" id="UPA01017"/>
<dbReference type="PHI-base" id="PHI:6665"/>
<dbReference type="Proteomes" id="UP000001010">
    <property type="component" value="Chromosome"/>
</dbReference>
<dbReference type="GO" id="GO:0005886">
    <property type="term" value="C:plasma membrane"/>
    <property type="evidence" value="ECO:0007669"/>
    <property type="project" value="UniProtKB-SubCell"/>
</dbReference>
<dbReference type="GO" id="GO:0016757">
    <property type="term" value="F:glycosyltransferase activity"/>
    <property type="evidence" value="ECO:0007669"/>
    <property type="project" value="UniProtKB-KW"/>
</dbReference>
<dbReference type="Gene3D" id="3.40.50.2000">
    <property type="entry name" value="Glycogen Phosphorylase B"/>
    <property type="match status" value="2"/>
</dbReference>
<dbReference type="Pfam" id="PF13692">
    <property type="entry name" value="Glyco_trans_1_4"/>
    <property type="match status" value="1"/>
</dbReference>
<dbReference type="SUPFAM" id="SSF53756">
    <property type="entry name" value="UDP-Glycosyltransferase/glycogen phosphorylase"/>
    <property type="match status" value="1"/>
</dbReference>
<reference key="1">
    <citation type="journal article" date="2002" name="Nature">
        <title>Comparison of the genomes of two Xanthomonas pathogens with differing host specificities.</title>
        <authorList>
            <person name="da Silva A.C.R."/>
            <person name="Ferro J.A."/>
            <person name="Reinach F.C."/>
            <person name="Farah C.S."/>
            <person name="Furlan L.R."/>
            <person name="Quaggio R.B."/>
            <person name="Monteiro-Vitorello C.B."/>
            <person name="Van Sluys M.A."/>
            <person name="Almeida N.F. Jr."/>
            <person name="Alves L.M.C."/>
            <person name="do Amaral A.M."/>
            <person name="Bertolini M.C."/>
            <person name="Camargo L.E.A."/>
            <person name="Camarotte G."/>
            <person name="Cannavan F."/>
            <person name="Cardozo J."/>
            <person name="Chambergo F."/>
            <person name="Ciapina L.P."/>
            <person name="Cicarelli R.M.B."/>
            <person name="Coutinho L.L."/>
            <person name="Cursino-Santos J.R."/>
            <person name="El-Dorry H."/>
            <person name="Faria J.B."/>
            <person name="Ferreira A.J.S."/>
            <person name="Ferreira R.C.C."/>
            <person name="Ferro M.I.T."/>
            <person name="Formighieri E.F."/>
            <person name="Franco M.C."/>
            <person name="Greggio C.C."/>
            <person name="Gruber A."/>
            <person name="Katsuyama A.M."/>
            <person name="Kishi L.T."/>
            <person name="Leite R.P."/>
            <person name="Lemos E.G.M."/>
            <person name="Lemos M.V.F."/>
            <person name="Locali E.C."/>
            <person name="Machado M.A."/>
            <person name="Madeira A.M.B.N."/>
            <person name="Martinez-Rossi N.M."/>
            <person name="Martins E.C."/>
            <person name="Meidanis J."/>
            <person name="Menck C.F.M."/>
            <person name="Miyaki C.Y."/>
            <person name="Moon D.H."/>
            <person name="Moreira L.M."/>
            <person name="Novo M.T.M."/>
            <person name="Okura V.K."/>
            <person name="Oliveira M.C."/>
            <person name="Oliveira V.R."/>
            <person name="Pereira H.A."/>
            <person name="Rossi A."/>
            <person name="Sena J.A.D."/>
            <person name="Silva C."/>
            <person name="de Souza R.F."/>
            <person name="Spinola L.A.F."/>
            <person name="Takita M.A."/>
            <person name="Tamura R.E."/>
            <person name="Teixeira E.C."/>
            <person name="Tezza R.I.D."/>
            <person name="Trindade dos Santos M."/>
            <person name="Truffi D."/>
            <person name="Tsai S.M."/>
            <person name="White F.F."/>
            <person name="Setubal J.C."/>
            <person name="Kitajima J.P."/>
        </authorList>
    </citation>
    <scope>NUCLEOTIDE SEQUENCE [LARGE SCALE GENOMIC DNA]</scope>
    <source>
        <strain>ATCC 33913 / DSM 3586 / NCPPB 528 / LMG 568 / P 25</strain>
    </source>
</reference>
<feature type="signal peptide" evidence="2">
    <location>
        <begin position="1"/>
        <end position="14"/>
    </location>
</feature>
<feature type="chain" id="PRO_0000414018" description="GDP-mannose:glycolipid 4-beta-D-mannosyltransferase">
    <location>
        <begin position="15"/>
        <end position="349"/>
    </location>
</feature>
<sequence>MSASASLPVTRAAAAPRITVLFSTEKPNANTNPYLTQLYDALPDAVQPRFFSMREALLSRYDVLHLHWPEYLLRHPSKMGTLAKQACAALLLMKLQLTGTPVVRTLHNLAPHEDRGWRERALLRWIDQLTRRWIRINATTPVRPPFTDTILHGHYRDWFATMEQGTTVPGRLLHFGLIRPYKGVEVLLDVMRDVQDPRLSLRIVGNPATPQMRTLVETACAQDARISALLAYVEEPVLAREVSACELVVLPYKQMHNSGTLLLALSLARPVLAPWSESNAAIAEEVGPGWVFLYEGEFDAALLSGMLDQVRAAPRGPAPDLSQRDWPRIGQLHYRTYLEALGKDGDAAL</sequence>
<protein>
    <recommendedName>
        <fullName>GDP-mannose:glycolipid 4-beta-D-mannosyltransferase</fullName>
        <ecNumber>2.4.1.251</ecNumber>
    </recommendedName>
    <alternativeName>
        <fullName>GlcA-beta-(1-&gt;2)-D-Man-alpha-(1-&gt;3)-D-Glc-beta-(1-&gt;4)-D-Glc-alpha-1-diphosphoundecaprenol 4-beta-mannosyltransferase</fullName>
    </alternativeName>
</protein>
<name>GUMI_XANCP</name>
<organism>
    <name type="scientific">Xanthomonas campestris pv. campestris (strain ATCC 33913 / DSM 3586 / NCPPB 528 / LMG 568 / P 25)</name>
    <dbReference type="NCBI Taxonomy" id="190485"/>
    <lineage>
        <taxon>Bacteria</taxon>
        <taxon>Pseudomonadati</taxon>
        <taxon>Pseudomonadota</taxon>
        <taxon>Gammaproteobacteria</taxon>
        <taxon>Lysobacterales</taxon>
        <taxon>Lysobacteraceae</taxon>
        <taxon>Xanthomonas</taxon>
    </lineage>
</organism>
<proteinExistence type="inferred from homology"/>
<gene>
    <name type="primary">gumI</name>
    <name type="ordered locus">XCC2447</name>
</gene>